<keyword id="KW-0547">Nucleotide-binding</keyword>
<feature type="chain" id="PRO_0000106197" description="Nucleotide-binding protein YajQ">
    <location>
        <begin position="1"/>
        <end position="163"/>
    </location>
</feature>
<proteinExistence type="inferred from homology"/>
<name>YAJQ_SALTI</name>
<gene>
    <name evidence="1" type="primary">yajQ</name>
    <name type="ordered locus">STY0474</name>
    <name type="ordered locus">t2428</name>
</gene>
<accession>Q8Z8W2</accession>
<reference key="1">
    <citation type="journal article" date="2001" name="Nature">
        <title>Complete genome sequence of a multiple drug resistant Salmonella enterica serovar Typhi CT18.</title>
        <authorList>
            <person name="Parkhill J."/>
            <person name="Dougan G."/>
            <person name="James K.D."/>
            <person name="Thomson N.R."/>
            <person name="Pickard D."/>
            <person name="Wain J."/>
            <person name="Churcher C.M."/>
            <person name="Mungall K.L."/>
            <person name="Bentley S.D."/>
            <person name="Holden M.T.G."/>
            <person name="Sebaihia M."/>
            <person name="Baker S."/>
            <person name="Basham D."/>
            <person name="Brooks K."/>
            <person name="Chillingworth T."/>
            <person name="Connerton P."/>
            <person name="Cronin A."/>
            <person name="Davis P."/>
            <person name="Davies R.M."/>
            <person name="Dowd L."/>
            <person name="White N."/>
            <person name="Farrar J."/>
            <person name="Feltwell T."/>
            <person name="Hamlin N."/>
            <person name="Haque A."/>
            <person name="Hien T.T."/>
            <person name="Holroyd S."/>
            <person name="Jagels K."/>
            <person name="Krogh A."/>
            <person name="Larsen T.S."/>
            <person name="Leather S."/>
            <person name="Moule S."/>
            <person name="O'Gaora P."/>
            <person name="Parry C."/>
            <person name="Quail M.A."/>
            <person name="Rutherford K.M."/>
            <person name="Simmonds M."/>
            <person name="Skelton J."/>
            <person name="Stevens K."/>
            <person name="Whitehead S."/>
            <person name="Barrell B.G."/>
        </authorList>
    </citation>
    <scope>NUCLEOTIDE SEQUENCE [LARGE SCALE GENOMIC DNA]</scope>
    <source>
        <strain>CT18</strain>
    </source>
</reference>
<reference key="2">
    <citation type="journal article" date="2003" name="J. Bacteriol.">
        <title>Comparative genomics of Salmonella enterica serovar Typhi strains Ty2 and CT18.</title>
        <authorList>
            <person name="Deng W."/>
            <person name="Liou S.-R."/>
            <person name="Plunkett G. III"/>
            <person name="Mayhew G.F."/>
            <person name="Rose D.J."/>
            <person name="Burland V."/>
            <person name="Kodoyianni V."/>
            <person name="Schwartz D.C."/>
            <person name="Blattner F.R."/>
        </authorList>
    </citation>
    <scope>NUCLEOTIDE SEQUENCE [LARGE SCALE GENOMIC DNA]</scope>
    <source>
        <strain>ATCC 700931 / Ty2</strain>
    </source>
</reference>
<protein>
    <recommendedName>
        <fullName evidence="1">Nucleotide-binding protein YajQ</fullName>
    </recommendedName>
</protein>
<dbReference type="EMBL" id="AL513382">
    <property type="protein sequence ID" value="CAD08891.1"/>
    <property type="status" value="ALT_INIT"/>
    <property type="molecule type" value="Genomic_DNA"/>
</dbReference>
<dbReference type="EMBL" id="AE014613">
    <property type="protein sequence ID" value="AAO70018.1"/>
    <property type="status" value="ALT_INIT"/>
    <property type="molecule type" value="Genomic_DNA"/>
</dbReference>
<dbReference type="RefSeq" id="NP_455029.3">
    <property type="nucleotide sequence ID" value="NC_003198.1"/>
</dbReference>
<dbReference type="RefSeq" id="WP_001138911.1">
    <property type="nucleotide sequence ID" value="NZ_WSUR01000026.1"/>
</dbReference>
<dbReference type="SMR" id="Q8Z8W2"/>
<dbReference type="STRING" id="220341.gene:17584496"/>
<dbReference type="KEGG" id="stt:t2428"/>
<dbReference type="KEGG" id="sty:STY0474"/>
<dbReference type="PATRIC" id="fig|220341.7.peg.475"/>
<dbReference type="eggNOG" id="COG1666">
    <property type="taxonomic scope" value="Bacteria"/>
</dbReference>
<dbReference type="HOGENOM" id="CLU_099839_1_0_6"/>
<dbReference type="OMA" id="DFKGVGA"/>
<dbReference type="Proteomes" id="UP000000541">
    <property type="component" value="Chromosome"/>
</dbReference>
<dbReference type="Proteomes" id="UP000002670">
    <property type="component" value="Chromosome"/>
</dbReference>
<dbReference type="GO" id="GO:0005829">
    <property type="term" value="C:cytosol"/>
    <property type="evidence" value="ECO:0007669"/>
    <property type="project" value="TreeGrafter"/>
</dbReference>
<dbReference type="GO" id="GO:0000166">
    <property type="term" value="F:nucleotide binding"/>
    <property type="evidence" value="ECO:0007669"/>
    <property type="project" value="TreeGrafter"/>
</dbReference>
<dbReference type="CDD" id="cd11740">
    <property type="entry name" value="YajQ_like"/>
    <property type="match status" value="1"/>
</dbReference>
<dbReference type="FunFam" id="3.30.70.860:FF:000001">
    <property type="entry name" value="UPF0234 protein YajQ"/>
    <property type="match status" value="1"/>
</dbReference>
<dbReference type="FunFam" id="3.30.70.990:FF:000001">
    <property type="entry name" value="UPF0234 protein YajQ"/>
    <property type="match status" value="1"/>
</dbReference>
<dbReference type="Gene3D" id="3.30.70.860">
    <property type="match status" value="1"/>
</dbReference>
<dbReference type="Gene3D" id="3.30.70.990">
    <property type="entry name" value="YajQ-like, domain 2"/>
    <property type="match status" value="1"/>
</dbReference>
<dbReference type="HAMAP" id="MF_00632">
    <property type="entry name" value="YajQ"/>
    <property type="match status" value="1"/>
</dbReference>
<dbReference type="InterPro" id="IPR007551">
    <property type="entry name" value="DUF520"/>
</dbReference>
<dbReference type="InterPro" id="IPR035571">
    <property type="entry name" value="UPF0234-like_C"/>
</dbReference>
<dbReference type="InterPro" id="IPR035570">
    <property type="entry name" value="UPF0234_N"/>
</dbReference>
<dbReference type="InterPro" id="IPR036183">
    <property type="entry name" value="YajQ-like_sf"/>
</dbReference>
<dbReference type="NCBIfam" id="NF003819">
    <property type="entry name" value="PRK05412.1"/>
    <property type="match status" value="1"/>
</dbReference>
<dbReference type="PANTHER" id="PTHR30476">
    <property type="entry name" value="UPF0234 PROTEIN YAJQ"/>
    <property type="match status" value="1"/>
</dbReference>
<dbReference type="PANTHER" id="PTHR30476:SF0">
    <property type="entry name" value="UPF0234 PROTEIN YAJQ"/>
    <property type="match status" value="1"/>
</dbReference>
<dbReference type="Pfam" id="PF04461">
    <property type="entry name" value="DUF520"/>
    <property type="match status" value="1"/>
</dbReference>
<dbReference type="SUPFAM" id="SSF89963">
    <property type="entry name" value="YajQ-like"/>
    <property type="match status" value="2"/>
</dbReference>
<evidence type="ECO:0000255" key="1">
    <source>
        <dbReference type="HAMAP-Rule" id="MF_00632"/>
    </source>
</evidence>
<evidence type="ECO:0000305" key="2"/>
<comment type="function">
    <text evidence="1">Nucleotide-binding protein.</text>
</comment>
<comment type="similarity">
    <text evidence="1">Belongs to the YajQ family.</text>
</comment>
<comment type="sequence caution" evidence="2">
    <conflict type="erroneous initiation">
        <sequence resource="EMBL-CDS" id="AAO70018"/>
    </conflict>
</comment>
<comment type="sequence caution" evidence="2">
    <conflict type="erroneous initiation">
        <sequence resource="EMBL-CDS" id="CAD08891"/>
    </conflict>
</comment>
<sequence length="163" mass="18377">MPSFDIVSEVDLQEARNGVDNAVREVESRFDFRGVEATIELNDANKTIKVLSESDFQVNQLLDILRAKLLKRGIEGASLDVPDEFVHSGKTWYVEAKLKQGIESAVQKKIVKLIKDSKLKVQAQIQGEEIRVTGKSRDDLQSVMALVRGDDLGQPFQFKNFRD</sequence>
<organism>
    <name type="scientific">Salmonella typhi</name>
    <dbReference type="NCBI Taxonomy" id="90370"/>
    <lineage>
        <taxon>Bacteria</taxon>
        <taxon>Pseudomonadati</taxon>
        <taxon>Pseudomonadota</taxon>
        <taxon>Gammaproteobacteria</taxon>
        <taxon>Enterobacterales</taxon>
        <taxon>Enterobacteriaceae</taxon>
        <taxon>Salmonella</taxon>
    </lineage>
</organism>